<reference key="1">
    <citation type="submission" date="2005-07" db="EMBL/GenBank/DDBJ databases">
        <authorList>
            <person name="Li N."/>
            <person name="Yuan X.-B."/>
        </authorList>
    </citation>
    <scope>NUCLEOTIDE SEQUENCE [MRNA]</scope>
    <source>
        <strain>C57BL/6J</strain>
        <tissue>Cerebellum</tissue>
    </source>
</reference>
<reference key="2">
    <citation type="journal article" date="2004" name="Genome Res.">
        <title>The status, quality, and expansion of the NIH full-length cDNA project: the Mammalian Gene Collection (MGC).</title>
        <authorList>
            <consortium name="The MGC Project Team"/>
        </authorList>
    </citation>
    <scope>NUCLEOTIDE SEQUENCE [LARGE SCALE MRNA]</scope>
    <source>
        <strain>FVB/N</strain>
        <tissue>Mammary tumor</tissue>
    </source>
</reference>
<reference key="3">
    <citation type="journal article" date="2004" name="Mol. Cell. Proteomics">
        <title>Phosphoproteomic analysis of the developing mouse brain.</title>
        <authorList>
            <person name="Ballif B.A."/>
            <person name="Villen J."/>
            <person name="Beausoleil S.A."/>
            <person name="Schwartz D."/>
            <person name="Gygi S.P."/>
        </authorList>
    </citation>
    <scope>PHOSPHORYLATION [LARGE SCALE ANALYSIS] AT SER-58</scope>
    <scope>IDENTIFICATION BY MASS SPECTROMETRY [LARGE SCALE ANALYSIS]</scope>
    <source>
        <tissue>Embryonic brain</tissue>
    </source>
</reference>
<reference key="4">
    <citation type="journal article" date="2010" name="Cell">
        <title>A tissue-specific atlas of mouse protein phosphorylation and expression.</title>
        <authorList>
            <person name="Huttlin E.L."/>
            <person name="Jedrychowski M.P."/>
            <person name="Elias J.E."/>
            <person name="Goswami T."/>
            <person name="Rad R."/>
            <person name="Beausoleil S.A."/>
            <person name="Villen J."/>
            <person name="Haas W."/>
            <person name="Sowa M.E."/>
            <person name="Gygi S.P."/>
        </authorList>
    </citation>
    <scope>PHOSPHORYLATION [LARGE SCALE ANALYSIS] AT SER-58 AND SER-316</scope>
    <scope>IDENTIFICATION BY MASS SPECTROMETRY [LARGE SCALE ANALYSIS]</scope>
    <source>
        <tissue>Brain</tissue>
    </source>
</reference>
<organism>
    <name type="scientific">Mus musculus</name>
    <name type="common">Mouse</name>
    <dbReference type="NCBI Taxonomy" id="10090"/>
    <lineage>
        <taxon>Eukaryota</taxon>
        <taxon>Metazoa</taxon>
        <taxon>Chordata</taxon>
        <taxon>Craniata</taxon>
        <taxon>Vertebrata</taxon>
        <taxon>Euteleostomi</taxon>
        <taxon>Mammalia</taxon>
        <taxon>Eutheria</taxon>
        <taxon>Euarchontoglires</taxon>
        <taxon>Glires</taxon>
        <taxon>Rodentia</taxon>
        <taxon>Myomorpha</taxon>
        <taxon>Muroidea</taxon>
        <taxon>Muridae</taxon>
        <taxon>Murinae</taxon>
        <taxon>Mus</taxon>
        <taxon>Mus</taxon>
    </lineage>
</organism>
<keyword id="KW-1003">Cell membrane</keyword>
<keyword id="KW-0175">Coiled coil</keyword>
<keyword id="KW-0963">Cytoplasm</keyword>
<keyword id="KW-0206">Cytoskeleton</keyword>
<keyword id="KW-0472">Membrane</keyword>
<keyword id="KW-0493">Microtubule</keyword>
<keyword id="KW-0597">Phosphoprotein</keyword>
<keyword id="KW-1185">Reference proteome</keyword>
<keyword id="KW-0813">Transport</keyword>
<keyword id="KW-0832">Ubl conjugation</keyword>
<dbReference type="EMBL" id="DQ141674">
    <property type="protein sequence ID" value="AAZ74351.1"/>
    <property type="molecule type" value="mRNA"/>
</dbReference>
<dbReference type="EMBL" id="BC029629">
    <property type="protein sequence ID" value="AAH29629.1"/>
    <property type="molecule type" value="mRNA"/>
</dbReference>
<dbReference type="CCDS" id="CCDS40581.1"/>
<dbReference type="RefSeq" id="NP_001344539.1">
    <property type="nucleotide sequence ID" value="NM_001357610.1"/>
</dbReference>
<dbReference type="RefSeq" id="NP_001344540.1">
    <property type="nucleotide sequence ID" value="NM_001357611.1"/>
</dbReference>
<dbReference type="RefSeq" id="NP_001344541.1">
    <property type="nucleotide sequence ID" value="NM_001357612.1"/>
</dbReference>
<dbReference type="RefSeq" id="NP_001344542.1">
    <property type="nucleotide sequence ID" value="NM_001357613.2"/>
</dbReference>
<dbReference type="RefSeq" id="NP_001344543.1">
    <property type="nucleotide sequence ID" value="NM_001357614.1"/>
</dbReference>
<dbReference type="RefSeq" id="NP_898994.2">
    <property type="nucleotide sequence ID" value="NM_183171.6"/>
</dbReference>
<dbReference type="RefSeq" id="XP_006510290.1">
    <property type="nucleotide sequence ID" value="XM_006510227.3"/>
</dbReference>
<dbReference type="RefSeq" id="XP_006510291.1">
    <property type="nucleotide sequence ID" value="XM_006510228.3"/>
</dbReference>
<dbReference type="RefSeq" id="XP_006510292.1">
    <property type="nucleotide sequence ID" value="XM_006510229.3"/>
</dbReference>
<dbReference type="RefSeq" id="XP_017168801.1">
    <property type="nucleotide sequence ID" value="XM_017313312.1"/>
</dbReference>
<dbReference type="RefSeq" id="XP_017168802.1">
    <property type="nucleotide sequence ID" value="XM_017313313.1"/>
</dbReference>
<dbReference type="RefSeq" id="XP_030100152.1">
    <property type="nucleotide sequence ID" value="XM_030244292.2"/>
</dbReference>
<dbReference type="RefSeq" id="XP_030100153.1">
    <property type="nucleotide sequence ID" value="XM_030244293.2"/>
</dbReference>
<dbReference type="BioGRID" id="231627">
    <property type="interactions" value="5"/>
</dbReference>
<dbReference type="FunCoup" id="Q8K0X8">
    <property type="interactions" value="1186"/>
</dbReference>
<dbReference type="STRING" id="10090.ENSMUSP00000034630"/>
<dbReference type="iPTMnet" id="Q8K0X8"/>
<dbReference type="PhosphoSitePlus" id="Q8K0X8"/>
<dbReference type="PaxDb" id="10090-ENSMUSP00000034630"/>
<dbReference type="PeptideAtlas" id="Q8K0X8"/>
<dbReference type="ProteomicsDB" id="271745"/>
<dbReference type="Antibodypedia" id="32949">
    <property type="antibodies" value="201 antibodies from 33 providers"/>
</dbReference>
<dbReference type="DNASU" id="235180"/>
<dbReference type="Ensembl" id="ENSMUST00000034630.15">
    <property type="protein sequence ID" value="ENSMUSP00000034630.9"/>
    <property type="gene ID" value="ENSMUSG00000032118.17"/>
</dbReference>
<dbReference type="Ensembl" id="ENSMUST00000163816.8">
    <property type="protein sequence ID" value="ENSMUSP00000126072.2"/>
    <property type="gene ID" value="ENSMUSG00000032118.17"/>
</dbReference>
<dbReference type="GeneID" id="235180"/>
<dbReference type="KEGG" id="mmu:235180"/>
<dbReference type="UCSC" id="uc009ouc.1">
    <property type="organism name" value="mouse"/>
</dbReference>
<dbReference type="AGR" id="MGI:2670976"/>
<dbReference type="CTD" id="9638"/>
<dbReference type="MGI" id="MGI:2670976">
    <property type="gene designation" value="Fez1"/>
</dbReference>
<dbReference type="VEuPathDB" id="HostDB:ENSMUSG00000032118"/>
<dbReference type="eggNOG" id="KOG3919">
    <property type="taxonomic scope" value="Eukaryota"/>
</dbReference>
<dbReference type="GeneTree" id="ENSGT00390000017627"/>
<dbReference type="HOGENOM" id="CLU_041596_0_0_1"/>
<dbReference type="InParanoid" id="Q8K0X8"/>
<dbReference type="OMA" id="MIGHHHG"/>
<dbReference type="OrthoDB" id="7959977at2759"/>
<dbReference type="PhylomeDB" id="Q8K0X8"/>
<dbReference type="TreeFam" id="TF313128"/>
<dbReference type="BioGRID-ORCS" id="235180">
    <property type="hits" value="4 hits in 77 CRISPR screens"/>
</dbReference>
<dbReference type="PRO" id="PR:Q8K0X8"/>
<dbReference type="Proteomes" id="UP000000589">
    <property type="component" value="Chromosome 9"/>
</dbReference>
<dbReference type="RNAct" id="Q8K0X8">
    <property type="molecule type" value="protein"/>
</dbReference>
<dbReference type="Bgee" id="ENSMUSG00000032118">
    <property type="expression patterns" value="Expressed in cerebellar nuclear complex and 199 other cell types or tissues"/>
</dbReference>
<dbReference type="ExpressionAtlas" id="Q8K0X8">
    <property type="expression patterns" value="baseline and differential"/>
</dbReference>
<dbReference type="GO" id="GO:0005813">
    <property type="term" value="C:centrosome"/>
    <property type="evidence" value="ECO:0000314"/>
    <property type="project" value="MGI"/>
</dbReference>
<dbReference type="GO" id="GO:0005737">
    <property type="term" value="C:cytoplasm"/>
    <property type="evidence" value="ECO:0000314"/>
    <property type="project" value="MGI"/>
</dbReference>
<dbReference type="GO" id="GO:0030425">
    <property type="term" value="C:dendrite"/>
    <property type="evidence" value="ECO:0007669"/>
    <property type="project" value="Ensembl"/>
</dbReference>
<dbReference type="GO" id="GO:0005794">
    <property type="term" value="C:Golgi apparatus"/>
    <property type="evidence" value="ECO:0007669"/>
    <property type="project" value="Ensembl"/>
</dbReference>
<dbReference type="GO" id="GO:0030426">
    <property type="term" value="C:growth cone"/>
    <property type="evidence" value="ECO:0007669"/>
    <property type="project" value="Ensembl"/>
</dbReference>
<dbReference type="GO" id="GO:0005874">
    <property type="term" value="C:microtubule"/>
    <property type="evidence" value="ECO:0007669"/>
    <property type="project" value="UniProtKB-KW"/>
</dbReference>
<dbReference type="GO" id="GO:0043025">
    <property type="term" value="C:neuronal cell body"/>
    <property type="evidence" value="ECO:0007669"/>
    <property type="project" value="Ensembl"/>
</dbReference>
<dbReference type="GO" id="GO:0005886">
    <property type="term" value="C:plasma membrane"/>
    <property type="evidence" value="ECO:0007669"/>
    <property type="project" value="UniProtKB-SubCell"/>
</dbReference>
<dbReference type="GO" id="GO:0043015">
    <property type="term" value="F:gamma-tubulin binding"/>
    <property type="evidence" value="ECO:0000314"/>
    <property type="project" value="MGI"/>
</dbReference>
<dbReference type="GO" id="GO:0005080">
    <property type="term" value="F:protein kinase C binding"/>
    <property type="evidence" value="ECO:0007669"/>
    <property type="project" value="Ensembl"/>
</dbReference>
<dbReference type="GO" id="GO:0071363">
    <property type="term" value="P:cellular response to growth factor stimulus"/>
    <property type="evidence" value="ECO:0007669"/>
    <property type="project" value="Ensembl"/>
</dbReference>
<dbReference type="GO" id="GO:0030010">
    <property type="term" value="P:establishment of cell polarity"/>
    <property type="evidence" value="ECO:0007669"/>
    <property type="project" value="Ensembl"/>
</dbReference>
<dbReference type="GO" id="GO:0051654">
    <property type="term" value="P:establishment of mitochondrion localization"/>
    <property type="evidence" value="ECO:0007669"/>
    <property type="project" value="Ensembl"/>
</dbReference>
<dbReference type="GO" id="GO:0021766">
    <property type="term" value="P:hippocampus development"/>
    <property type="evidence" value="ECO:0007669"/>
    <property type="project" value="Ensembl"/>
</dbReference>
<dbReference type="GO" id="GO:0007005">
    <property type="term" value="P:mitochondrion organization"/>
    <property type="evidence" value="ECO:0007669"/>
    <property type="project" value="Ensembl"/>
</dbReference>
<dbReference type="GO" id="GO:1902902">
    <property type="term" value="P:negative regulation of autophagosome assembly"/>
    <property type="evidence" value="ECO:0000250"/>
    <property type="project" value="GO_Central"/>
</dbReference>
<dbReference type="GO" id="GO:0061881">
    <property type="term" value="P:positive regulation of anterograde axonal transport of mitochondrion"/>
    <property type="evidence" value="ECO:0007669"/>
    <property type="project" value="Ensembl"/>
</dbReference>
<dbReference type="GO" id="GO:0010976">
    <property type="term" value="P:positive regulation of neuron projection development"/>
    <property type="evidence" value="ECO:0007669"/>
    <property type="project" value="Ensembl"/>
</dbReference>
<dbReference type="InterPro" id="IPR011680">
    <property type="entry name" value="FEZ"/>
</dbReference>
<dbReference type="PANTHER" id="PTHR12394:SF4">
    <property type="entry name" value="FASCICULATION AND ELONGATION PROTEIN ZETA-1"/>
    <property type="match status" value="1"/>
</dbReference>
<dbReference type="PANTHER" id="PTHR12394">
    <property type="entry name" value="ZYGIN"/>
    <property type="match status" value="1"/>
</dbReference>
<dbReference type="Pfam" id="PF07763">
    <property type="entry name" value="FEZ"/>
    <property type="match status" value="1"/>
</dbReference>
<comment type="function">
    <text evidence="1">May be involved in axonal outgrowth as component of the network of molecules that regulate cellular morphology and axon guidance machinery. May participate in the transport of mitochondria and other cargos along microtubules (By similarity).</text>
</comment>
<comment type="subunit">
    <text evidence="1">Homodimer. Interacts with the NH2-terminal variable region (V1) of PKC zeta and weakly with that of PKC epsilon. Interacts with UBE4B and SAP30L (By similarity). Interacts with SCOC and ULK1; SCOC interferes with ULK1-binding to FEZ1 (By similarity). Directly interacts with SCOC and UVRAG. Stabilizes the interaction between SCOC and UVRAG during amino acid starvation (By similarity).</text>
</comment>
<comment type="subcellular location">
    <subcellularLocation>
        <location evidence="1">Cytoplasm</location>
        <location evidence="1">Cytoskeleton</location>
        <location evidence="1">Microtubule organizing center</location>
        <location evidence="1">Centrosome</location>
    </subcellularLocation>
    <subcellularLocation>
        <location evidence="1">Cell membrane</location>
    </subcellularLocation>
    <text evidence="1">Colocalizes with both, alpha- and gamma-tubulin. Translocated from the plasma membrane to the cytoplasm by activation of the PKC zeta (By similarity).</text>
</comment>
<comment type="PTM">
    <text evidence="1">Phosphorylated by protein kinase C zeta; which enhances interaction with UBE4B and polyubiquitination.</text>
</comment>
<comment type="PTM">
    <text evidence="1">Polyubiquitinated in a UBE4B-dependent manner; which does not lead to proteasomal degradation and may be important for neurogenic activity. Polyubiquitin linkage seems to be mainly through Lys-26 (By similarity).</text>
</comment>
<comment type="similarity">
    <text evidence="5">Belongs to the zygin family.</text>
</comment>
<proteinExistence type="evidence at protein level"/>
<gene>
    <name type="primary">Fez1</name>
</gene>
<name>FEZ1_MOUSE</name>
<protein>
    <recommendedName>
        <fullName>Fasciculation and elongation protein zeta-1</fullName>
    </recommendedName>
    <alternativeName>
        <fullName>Zygin I</fullName>
    </alternativeName>
    <alternativeName>
        <fullName>Zygin-1</fullName>
    </alternativeName>
</protein>
<sequence>MEAPLVSLDEEFEDIRPSCTEEPEEKPQCLYGTSPHHLEDPSLSELENFSSEIISFKSMEDLVNEFDEKLNVCFRNYNAKTESLAPVKNQLQIQEEEETLRDEEVWDALTDNYIPSLSEDWRDPNIEALNGNSSDIEIHEKEEEEFNEKSENDSGINEEPLLTADQVIEEIEEMMQNSPDPEEEEEVLEEEDGGEISSQADSVLLQEMQALTQTFNNNWSYEGLRHMSGSELTELLDRVEGAIRDFSEELVHQLARRDELEFEKEVKNSFITVLIEVQNKQREQRELMKKRRKEKGLSLQSNRIEKGSQMPLKRFSMEGISNILQSGIRQTFGSSGADRQYLNTVIPYEKKSSPPSVEDLQMLTNILFAMKEDNEKVPTLLTDYILKVLCPT</sequence>
<accession>Q8K0X8</accession>
<accession>Q3YE74</accession>
<feature type="chain" id="PRO_0000189526" description="Fasciculation and elongation protein zeta-1">
    <location>
        <begin position="1"/>
        <end position="392"/>
    </location>
</feature>
<feature type="region of interest" description="Disordered" evidence="4">
    <location>
        <begin position="1"/>
        <end position="36"/>
    </location>
</feature>
<feature type="region of interest" description="Disordered" evidence="4">
    <location>
        <begin position="175"/>
        <end position="196"/>
    </location>
</feature>
<feature type="coiled-coil region" evidence="3">
    <location>
        <begin position="230"/>
        <end position="298"/>
    </location>
</feature>
<feature type="compositionally biased region" description="Acidic residues" evidence="4">
    <location>
        <begin position="180"/>
        <end position="194"/>
    </location>
</feature>
<feature type="modified residue" description="Phosphoserine" evidence="6 7">
    <location>
        <position position="58"/>
    </location>
</feature>
<feature type="modified residue" description="Phosphoserine" evidence="2">
    <location>
        <position position="298"/>
    </location>
</feature>
<feature type="modified residue" description="Phosphoserine" evidence="7">
    <location>
        <position position="316"/>
    </location>
</feature>
<feature type="sequence conflict" description="In Ref. 2; AAH29629." evidence="5" ref="2">
    <original>N</original>
    <variation>I</variation>
    <location>
        <position position="89"/>
    </location>
</feature>
<feature type="sequence conflict" description="In Ref. 2; AAH29629." evidence="5" ref="2">
    <original>I</original>
    <variation>T</variation>
    <location>
        <position position="171"/>
    </location>
</feature>
<feature type="sequence conflict" description="In Ref. 2; AAH29629." evidence="5" ref="2">
    <original>N</original>
    <variation>D</variation>
    <location>
        <position position="217"/>
    </location>
</feature>
<evidence type="ECO:0000250" key="1"/>
<evidence type="ECO:0000250" key="2">
    <source>
        <dbReference type="UniProtKB" id="P97577"/>
    </source>
</evidence>
<evidence type="ECO:0000255" key="3"/>
<evidence type="ECO:0000256" key="4">
    <source>
        <dbReference type="SAM" id="MobiDB-lite"/>
    </source>
</evidence>
<evidence type="ECO:0000305" key="5"/>
<evidence type="ECO:0007744" key="6">
    <source>
    </source>
</evidence>
<evidence type="ECO:0007744" key="7">
    <source>
    </source>
</evidence>